<keyword id="KW-0067">ATP-binding</keyword>
<keyword id="KW-0436">Ligase</keyword>
<keyword id="KW-0460">Magnesium</keyword>
<keyword id="KW-0479">Metal-binding</keyword>
<keyword id="KW-0520">NAD</keyword>
<keyword id="KW-0547">Nucleotide-binding</keyword>
<keyword id="KW-1185">Reference proteome</keyword>
<gene>
    <name evidence="1" type="primary">nadE</name>
    <name type="ordered locus">Ssed_1802</name>
</gene>
<accession>A8FU90</accession>
<proteinExistence type="inferred from homology"/>
<name>NADE_SHESH</name>
<evidence type="ECO:0000255" key="1">
    <source>
        <dbReference type="HAMAP-Rule" id="MF_00193"/>
    </source>
</evidence>
<comment type="function">
    <text evidence="1">Catalyzes the ATP-dependent amidation of deamido-NAD to form NAD. Uses ammonia as a nitrogen source.</text>
</comment>
<comment type="catalytic activity">
    <reaction evidence="1">
        <text>deamido-NAD(+) + NH4(+) + ATP = AMP + diphosphate + NAD(+) + H(+)</text>
        <dbReference type="Rhea" id="RHEA:21188"/>
        <dbReference type="ChEBI" id="CHEBI:15378"/>
        <dbReference type="ChEBI" id="CHEBI:28938"/>
        <dbReference type="ChEBI" id="CHEBI:30616"/>
        <dbReference type="ChEBI" id="CHEBI:33019"/>
        <dbReference type="ChEBI" id="CHEBI:57540"/>
        <dbReference type="ChEBI" id="CHEBI:58437"/>
        <dbReference type="ChEBI" id="CHEBI:456215"/>
        <dbReference type="EC" id="6.3.1.5"/>
    </reaction>
</comment>
<comment type="pathway">
    <text evidence="1">Cofactor biosynthesis; NAD(+) biosynthesis; NAD(+) from deamido-NAD(+) (ammonia route): step 1/1.</text>
</comment>
<comment type="subunit">
    <text evidence="1">Homodimer.</text>
</comment>
<comment type="similarity">
    <text evidence="1">Belongs to the NAD synthetase family.</text>
</comment>
<dbReference type="EC" id="6.3.1.5" evidence="1"/>
<dbReference type="EMBL" id="CP000821">
    <property type="protein sequence ID" value="ABV36413.1"/>
    <property type="molecule type" value="Genomic_DNA"/>
</dbReference>
<dbReference type="RefSeq" id="WP_012142149.1">
    <property type="nucleotide sequence ID" value="NC_009831.1"/>
</dbReference>
<dbReference type="SMR" id="A8FU90"/>
<dbReference type="STRING" id="425104.Ssed_1802"/>
<dbReference type="KEGG" id="sse:Ssed_1802"/>
<dbReference type="eggNOG" id="COG0171">
    <property type="taxonomic scope" value="Bacteria"/>
</dbReference>
<dbReference type="HOGENOM" id="CLU_059327_3_0_6"/>
<dbReference type="OrthoDB" id="3266517at2"/>
<dbReference type="UniPathway" id="UPA00253">
    <property type="reaction ID" value="UER00333"/>
</dbReference>
<dbReference type="Proteomes" id="UP000002015">
    <property type="component" value="Chromosome"/>
</dbReference>
<dbReference type="GO" id="GO:0005737">
    <property type="term" value="C:cytoplasm"/>
    <property type="evidence" value="ECO:0007669"/>
    <property type="project" value="InterPro"/>
</dbReference>
<dbReference type="GO" id="GO:0005524">
    <property type="term" value="F:ATP binding"/>
    <property type="evidence" value="ECO:0007669"/>
    <property type="project" value="UniProtKB-UniRule"/>
</dbReference>
<dbReference type="GO" id="GO:0004359">
    <property type="term" value="F:glutaminase activity"/>
    <property type="evidence" value="ECO:0007669"/>
    <property type="project" value="InterPro"/>
</dbReference>
<dbReference type="GO" id="GO:0046872">
    <property type="term" value="F:metal ion binding"/>
    <property type="evidence" value="ECO:0007669"/>
    <property type="project" value="UniProtKB-KW"/>
</dbReference>
<dbReference type="GO" id="GO:0003952">
    <property type="term" value="F:NAD+ synthase (glutamine-hydrolyzing) activity"/>
    <property type="evidence" value="ECO:0007669"/>
    <property type="project" value="InterPro"/>
</dbReference>
<dbReference type="GO" id="GO:0008795">
    <property type="term" value="F:NAD+ synthase activity"/>
    <property type="evidence" value="ECO:0007669"/>
    <property type="project" value="UniProtKB-UniRule"/>
</dbReference>
<dbReference type="GO" id="GO:0009435">
    <property type="term" value="P:NAD biosynthetic process"/>
    <property type="evidence" value="ECO:0007669"/>
    <property type="project" value="UniProtKB-UniRule"/>
</dbReference>
<dbReference type="CDD" id="cd00553">
    <property type="entry name" value="NAD_synthase"/>
    <property type="match status" value="1"/>
</dbReference>
<dbReference type="FunFam" id="3.40.50.620:FF:000015">
    <property type="entry name" value="NH(3)-dependent NAD(+) synthetase"/>
    <property type="match status" value="1"/>
</dbReference>
<dbReference type="Gene3D" id="3.40.50.620">
    <property type="entry name" value="HUPs"/>
    <property type="match status" value="1"/>
</dbReference>
<dbReference type="HAMAP" id="MF_00193">
    <property type="entry name" value="NadE_ammonia_dep"/>
    <property type="match status" value="1"/>
</dbReference>
<dbReference type="InterPro" id="IPR022310">
    <property type="entry name" value="NAD/GMP_synthase"/>
</dbReference>
<dbReference type="InterPro" id="IPR003694">
    <property type="entry name" value="NAD_synthase"/>
</dbReference>
<dbReference type="InterPro" id="IPR022926">
    <property type="entry name" value="NH(3)-dep_NAD(+)_synth"/>
</dbReference>
<dbReference type="InterPro" id="IPR014729">
    <property type="entry name" value="Rossmann-like_a/b/a_fold"/>
</dbReference>
<dbReference type="NCBIfam" id="TIGR00552">
    <property type="entry name" value="nadE"/>
    <property type="match status" value="1"/>
</dbReference>
<dbReference type="NCBIfam" id="NF001979">
    <property type="entry name" value="PRK00768.1"/>
    <property type="match status" value="1"/>
</dbReference>
<dbReference type="PANTHER" id="PTHR23090">
    <property type="entry name" value="NH 3 /GLUTAMINE-DEPENDENT NAD + SYNTHETASE"/>
    <property type="match status" value="1"/>
</dbReference>
<dbReference type="PANTHER" id="PTHR23090:SF7">
    <property type="entry name" value="NH(3)-DEPENDENT NAD(+) SYNTHETASE"/>
    <property type="match status" value="1"/>
</dbReference>
<dbReference type="Pfam" id="PF02540">
    <property type="entry name" value="NAD_synthase"/>
    <property type="match status" value="1"/>
</dbReference>
<dbReference type="SUPFAM" id="SSF52402">
    <property type="entry name" value="Adenine nucleotide alpha hydrolases-like"/>
    <property type="match status" value="1"/>
</dbReference>
<organism>
    <name type="scientific">Shewanella sediminis (strain HAW-EB3)</name>
    <dbReference type="NCBI Taxonomy" id="425104"/>
    <lineage>
        <taxon>Bacteria</taxon>
        <taxon>Pseudomonadati</taxon>
        <taxon>Pseudomonadota</taxon>
        <taxon>Gammaproteobacteria</taxon>
        <taxon>Alteromonadales</taxon>
        <taxon>Shewanellaceae</taxon>
        <taxon>Shewanella</taxon>
    </lineage>
</organism>
<protein>
    <recommendedName>
        <fullName evidence="1">NH(3)-dependent NAD(+) synthetase</fullName>
        <ecNumber evidence="1">6.3.1.5</ecNumber>
    </recommendedName>
</protein>
<reference key="1">
    <citation type="submission" date="2007-08" db="EMBL/GenBank/DDBJ databases">
        <title>Complete sequence of Shewanella sediminis HAW-EB3.</title>
        <authorList>
            <consortium name="US DOE Joint Genome Institute"/>
            <person name="Copeland A."/>
            <person name="Lucas S."/>
            <person name="Lapidus A."/>
            <person name="Barry K."/>
            <person name="Glavina del Rio T."/>
            <person name="Dalin E."/>
            <person name="Tice H."/>
            <person name="Pitluck S."/>
            <person name="Chertkov O."/>
            <person name="Brettin T."/>
            <person name="Bruce D."/>
            <person name="Detter J.C."/>
            <person name="Han C."/>
            <person name="Schmutz J."/>
            <person name="Larimer F."/>
            <person name="Land M."/>
            <person name="Hauser L."/>
            <person name="Kyrpides N."/>
            <person name="Kim E."/>
            <person name="Zhao J.-S."/>
            <person name="Richardson P."/>
        </authorList>
    </citation>
    <scope>NUCLEOTIDE SEQUENCE [LARGE SCALE GENOMIC DNA]</scope>
    <source>
        <strain>HAW-EB3</strain>
    </source>
</reference>
<sequence length="276" mass="30426">MKGQILREMKVQPAIEPEYEVQRRVAFIKSKLKESYTHTLVLGISGGVDSTLAGRLCQLAVDELNGESQQTDYQFIAVRLPYHIQKDEHEAQLACDFISPSKQVSVNIHDGVLGTHHNTLNGLEAAGVDLAQNVNIDFVKGNVKARMRMIVQYEIAGLTGGLVVGTDHSAENITGFYTKWGDGACDLAPLFGLNKRQVRLLADYLGAPELLVHKAPTADLECDKPQLEDEAALGVTYDQIDDFLEGKPVDSAVNDRLIGIYKATQHKRQPIPTIYD</sequence>
<feature type="chain" id="PRO_1000099045" description="NH(3)-dependent NAD(+) synthetase">
    <location>
        <begin position="1"/>
        <end position="276"/>
    </location>
</feature>
<feature type="binding site" evidence="1">
    <location>
        <begin position="43"/>
        <end position="50"/>
    </location>
    <ligand>
        <name>ATP</name>
        <dbReference type="ChEBI" id="CHEBI:30616"/>
    </ligand>
</feature>
<feature type="binding site" evidence="1">
    <location>
        <position position="49"/>
    </location>
    <ligand>
        <name>Mg(2+)</name>
        <dbReference type="ChEBI" id="CHEBI:18420"/>
    </ligand>
</feature>
<feature type="binding site" evidence="1">
    <location>
        <position position="146"/>
    </location>
    <ligand>
        <name>deamido-NAD(+)</name>
        <dbReference type="ChEBI" id="CHEBI:58437"/>
    </ligand>
</feature>
<feature type="binding site" evidence="1">
    <location>
        <position position="166"/>
    </location>
    <ligand>
        <name>ATP</name>
        <dbReference type="ChEBI" id="CHEBI:30616"/>
    </ligand>
</feature>
<feature type="binding site" evidence="1">
    <location>
        <position position="171"/>
    </location>
    <ligand>
        <name>Mg(2+)</name>
        <dbReference type="ChEBI" id="CHEBI:18420"/>
    </ligand>
</feature>
<feature type="binding site" evidence="1">
    <location>
        <position position="179"/>
    </location>
    <ligand>
        <name>deamido-NAD(+)</name>
        <dbReference type="ChEBI" id="CHEBI:58437"/>
    </ligand>
</feature>
<feature type="binding site" evidence="1">
    <location>
        <position position="186"/>
    </location>
    <ligand>
        <name>deamido-NAD(+)</name>
        <dbReference type="ChEBI" id="CHEBI:58437"/>
    </ligand>
</feature>
<feature type="binding site" evidence="1">
    <location>
        <position position="195"/>
    </location>
    <ligand>
        <name>ATP</name>
        <dbReference type="ChEBI" id="CHEBI:30616"/>
    </ligand>
</feature>
<feature type="binding site" evidence="1">
    <location>
        <position position="217"/>
    </location>
    <ligand>
        <name>ATP</name>
        <dbReference type="ChEBI" id="CHEBI:30616"/>
    </ligand>
</feature>
<feature type="binding site" evidence="1">
    <location>
        <begin position="266"/>
        <end position="267"/>
    </location>
    <ligand>
        <name>deamido-NAD(+)</name>
        <dbReference type="ChEBI" id="CHEBI:58437"/>
    </ligand>
</feature>